<reference key="1">
    <citation type="journal article" date="2006" name="Mol. Microbiol.">
        <title>Role of pathogenicity island-associated integrases in the genome plasticity of uropathogenic Escherichia coli strain 536.</title>
        <authorList>
            <person name="Hochhut B."/>
            <person name="Wilde C."/>
            <person name="Balling G."/>
            <person name="Middendorf B."/>
            <person name="Dobrindt U."/>
            <person name="Brzuszkiewicz E."/>
            <person name="Gottschalk G."/>
            <person name="Carniel E."/>
            <person name="Hacker J."/>
        </authorList>
    </citation>
    <scope>NUCLEOTIDE SEQUENCE [LARGE SCALE GENOMIC DNA]</scope>
    <source>
        <strain>536 / UPEC</strain>
    </source>
</reference>
<dbReference type="EC" id="2.7.7.4" evidence="1"/>
<dbReference type="EMBL" id="CP000247">
    <property type="protein sequence ID" value="ABG70723.1"/>
    <property type="molecule type" value="Genomic_DNA"/>
</dbReference>
<dbReference type="RefSeq" id="WP_000372396.1">
    <property type="nucleotide sequence ID" value="NC_008253.1"/>
</dbReference>
<dbReference type="SMR" id="Q0TEA6"/>
<dbReference type="KEGG" id="ecp:ECP_2734"/>
<dbReference type="HOGENOM" id="CLU_043026_0_0_6"/>
<dbReference type="UniPathway" id="UPA00140">
    <property type="reaction ID" value="UER00204"/>
</dbReference>
<dbReference type="Proteomes" id="UP000009182">
    <property type="component" value="Chromosome"/>
</dbReference>
<dbReference type="GO" id="GO:0005524">
    <property type="term" value="F:ATP binding"/>
    <property type="evidence" value="ECO:0007669"/>
    <property type="project" value="UniProtKB-KW"/>
</dbReference>
<dbReference type="GO" id="GO:0004781">
    <property type="term" value="F:sulfate adenylyltransferase (ATP) activity"/>
    <property type="evidence" value="ECO:0007669"/>
    <property type="project" value="UniProtKB-UniRule"/>
</dbReference>
<dbReference type="GO" id="GO:0070814">
    <property type="term" value="P:hydrogen sulfide biosynthetic process"/>
    <property type="evidence" value="ECO:0007669"/>
    <property type="project" value="UniProtKB-UniRule"/>
</dbReference>
<dbReference type="GO" id="GO:0000103">
    <property type="term" value="P:sulfate assimilation"/>
    <property type="evidence" value="ECO:0007669"/>
    <property type="project" value="UniProtKB-UniRule"/>
</dbReference>
<dbReference type="CDD" id="cd23946">
    <property type="entry name" value="Sulfate_adenylyltransferase_2"/>
    <property type="match status" value="1"/>
</dbReference>
<dbReference type="FunFam" id="3.40.50.620:FF:000002">
    <property type="entry name" value="Sulfate adenylyltransferase subunit 2"/>
    <property type="match status" value="1"/>
</dbReference>
<dbReference type="Gene3D" id="3.40.50.620">
    <property type="entry name" value="HUPs"/>
    <property type="match status" value="1"/>
</dbReference>
<dbReference type="HAMAP" id="MF_00064">
    <property type="entry name" value="Sulf_adenylyltr_sub2"/>
    <property type="match status" value="1"/>
</dbReference>
<dbReference type="InterPro" id="IPR002500">
    <property type="entry name" value="PAPS_reduct_dom"/>
</dbReference>
<dbReference type="InterPro" id="IPR014729">
    <property type="entry name" value="Rossmann-like_a/b/a_fold"/>
</dbReference>
<dbReference type="InterPro" id="IPR011784">
    <property type="entry name" value="SO4_adenylTrfase_ssu"/>
</dbReference>
<dbReference type="InterPro" id="IPR050128">
    <property type="entry name" value="Sulfate_adenylyltrnsfr_sub2"/>
</dbReference>
<dbReference type="NCBIfam" id="TIGR02039">
    <property type="entry name" value="CysD"/>
    <property type="match status" value="1"/>
</dbReference>
<dbReference type="NCBIfam" id="NF003587">
    <property type="entry name" value="PRK05253.1"/>
    <property type="match status" value="1"/>
</dbReference>
<dbReference type="NCBIfam" id="NF009214">
    <property type="entry name" value="PRK12563.1"/>
    <property type="match status" value="1"/>
</dbReference>
<dbReference type="PANTHER" id="PTHR43196">
    <property type="entry name" value="SULFATE ADENYLYLTRANSFERASE SUBUNIT 2"/>
    <property type="match status" value="1"/>
</dbReference>
<dbReference type="PANTHER" id="PTHR43196:SF1">
    <property type="entry name" value="SULFATE ADENYLYLTRANSFERASE SUBUNIT 2"/>
    <property type="match status" value="1"/>
</dbReference>
<dbReference type="Pfam" id="PF01507">
    <property type="entry name" value="PAPS_reduct"/>
    <property type="match status" value="1"/>
</dbReference>
<dbReference type="PIRSF" id="PIRSF002936">
    <property type="entry name" value="CysDAde_trans"/>
    <property type="match status" value="1"/>
</dbReference>
<dbReference type="SUPFAM" id="SSF52402">
    <property type="entry name" value="Adenine nucleotide alpha hydrolases-like"/>
    <property type="match status" value="1"/>
</dbReference>
<organism>
    <name type="scientific">Escherichia coli O6:K15:H31 (strain 536 / UPEC)</name>
    <dbReference type="NCBI Taxonomy" id="362663"/>
    <lineage>
        <taxon>Bacteria</taxon>
        <taxon>Pseudomonadati</taxon>
        <taxon>Pseudomonadota</taxon>
        <taxon>Gammaproteobacteria</taxon>
        <taxon>Enterobacterales</taxon>
        <taxon>Enterobacteriaceae</taxon>
        <taxon>Escherichia</taxon>
    </lineage>
</organism>
<proteinExistence type="inferred from homology"/>
<gene>
    <name evidence="1" type="primary">cysD</name>
    <name type="ordered locus">ECP_2734</name>
</gene>
<sequence>MDQKRLTHLRQLEAESIHIIREVAAEFSNPVMLYSIGKDSSVMLHLARKAFYPGTLPFPLLHVDTGWKFREMYEFRDRTAKAYGCELLVHKNPEGVAMGINPFVHGSAKHTDIMKTEGLKQALNKYGFDAAFGGARRDEEKSRAKERIYSFRDRFHRWDPKNQRPELWHNYNGQINKGESIRVFPLSNWTEQDIWQYIWLENIDIVPLYLAAERPVLERDGMLMMIDDNRINLQPGEVIKKRMVRFRTLGCWPLTGAVESNAQTLPEIIEEMLVSTTSERQGRVIDRDQAGSMELKKRQGYF</sequence>
<accession>Q0TEA6</accession>
<keyword id="KW-0067">ATP-binding</keyword>
<keyword id="KW-0547">Nucleotide-binding</keyword>
<keyword id="KW-0548">Nucleotidyltransferase</keyword>
<keyword id="KW-0808">Transferase</keyword>
<feature type="chain" id="PRO_1000008956" description="Sulfate adenylyltransferase subunit 2">
    <location>
        <begin position="1"/>
        <end position="302"/>
    </location>
</feature>
<name>CYSD_ECOL5</name>
<evidence type="ECO:0000255" key="1">
    <source>
        <dbReference type="HAMAP-Rule" id="MF_00064"/>
    </source>
</evidence>
<comment type="function">
    <text evidence="1">With CysN forms the ATP sulfurylase (ATPS) that catalyzes the adenylation of sulfate producing adenosine 5'-phosphosulfate (APS) and diphosphate, the first enzymatic step in sulfur assimilation pathway. APS synthesis involves the formation of a high-energy phosphoric-sulfuric acid anhydride bond driven by GTP hydrolysis by CysN coupled to ATP hydrolysis by CysD.</text>
</comment>
<comment type="catalytic activity">
    <reaction evidence="1">
        <text>sulfate + ATP + H(+) = adenosine 5'-phosphosulfate + diphosphate</text>
        <dbReference type="Rhea" id="RHEA:18133"/>
        <dbReference type="ChEBI" id="CHEBI:15378"/>
        <dbReference type="ChEBI" id="CHEBI:16189"/>
        <dbReference type="ChEBI" id="CHEBI:30616"/>
        <dbReference type="ChEBI" id="CHEBI:33019"/>
        <dbReference type="ChEBI" id="CHEBI:58243"/>
        <dbReference type="EC" id="2.7.7.4"/>
    </reaction>
</comment>
<comment type="pathway">
    <text evidence="1">Sulfur metabolism; hydrogen sulfide biosynthesis; sulfite from sulfate: step 1/3.</text>
</comment>
<comment type="subunit">
    <text evidence="1">Heterodimer composed of CysD, the smaller subunit, and CysN.</text>
</comment>
<comment type="similarity">
    <text evidence="1">Belongs to the PAPS reductase family. CysD subfamily.</text>
</comment>
<protein>
    <recommendedName>
        <fullName evidence="1">Sulfate adenylyltransferase subunit 2</fullName>
        <ecNumber evidence="1">2.7.7.4</ecNumber>
    </recommendedName>
    <alternativeName>
        <fullName evidence="1">ATP-sulfurylase small subunit</fullName>
    </alternativeName>
    <alternativeName>
        <fullName evidence="1">Sulfate adenylate transferase</fullName>
        <shortName evidence="1">SAT</shortName>
    </alternativeName>
</protein>